<accession>P9WH79</accession>
<accession>L0T467</accession>
<accession>P66315</accession>
<accession>P71713</accession>
<name>RL9_MYCTU</name>
<organism>
    <name type="scientific">Mycobacterium tuberculosis (strain ATCC 25618 / H37Rv)</name>
    <dbReference type="NCBI Taxonomy" id="83332"/>
    <lineage>
        <taxon>Bacteria</taxon>
        <taxon>Bacillati</taxon>
        <taxon>Actinomycetota</taxon>
        <taxon>Actinomycetes</taxon>
        <taxon>Mycobacteriales</taxon>
        <taxon>Mycobacteriaceae</taxon>
        <taxon>Mycobacterium</taxon>
        <taxon>Mycobacterium tuberculosis complex</taxon>
    </lineage>
</organism>
<comment type="function">
    <text evidence="1">Binds to the 23S rRNA.</text>
</comment>
<comment type="similarity">
    <text evidence="1">Belongs to the bacterial ribosomal protein bL9 family.</text>
</comment>
<feature type="chain" id="PRO_0000176655" description="Large ribosomal subunit protein bL9">
    <location>
        <begin position="1"/>
        <end position="152"/>
    </location>
</feature>
<proteinExistence type="evidence at protein level"/>
<evidence type="ECO:0000255" key="1">
    <source>
        <dbReference type="HAMAP-Rule" id="MF_00503"/>
    </source>
</evidence>
<evidence type="ECO:0000305" key="2"/>
<keyword id="KW-0002">3D-structure</keyword>
<keyword id="KW-1185">Reference proteome</keyword>
<keyword id="KW-0687">Ribonucleoprotein</keyword>
<keyword id="KW-0689">Ribosomal protein</keyword>
<keyword id="KW-0694">RNA-binding</keyword>
<keyword id="KW-0699">rRNA-binding</keyword>
<dbReference type="EMBL" id="AL123456">
    <property type="protein sequence ID" value="CCP42778.1"/>
    <property type="molecule type" value="Genomic_DNA"/>
</dbReference>
<dbReference type="PIR" id="H70913">
    <property type="entry name" value="H70913"/>
</dbReference>
<dbReference type="RefSeq" id="NP_214570.1">
    <property type="nucleotide sequence ID" value="NC_000962.3"/>
</dbReference>
<dbReference type="RefSeq" id="WP_003400543.1">
    <property type="nucleotide sequence ID" value="NZ_NVQJ01000005.1"/>
</dbReference>
<dbReference type="PDB" id="5V7Q">
    <property type="method" value="EM"/>
    <property type="resolution" value="3.70 A"/>
    <property type="chains" value="H=1-152"/>
</dbReference>
<dbReference type="PDB" id="5V93">
    <property type="method" value="EM"/>
    <property type="resolution" value="4.00 A"/>
    <property type="chains" value="H=1-152"/>
</dbReference>
<dbReference type="PDB" id="7KGB">
    <property type="method" value="EM"/>
    <property type="resolution" value="2.70 A"/>
    <property type="chains" value="H=1-152"/>
</dbReference>
<dbReference type="PDB" id="7MSC">
    <property type="method" value="EM"/>
    <property type="resolution" value="2.97 A"/>
    <property type="chains" value="H=1-152"/>
</dbReference>
<dbReference type="PDB" id="7MSH">
    <property type="method" value="EM"/>
    <property type="resolution" value="3.23 A"/>
    <property type="chains" value="H=1-152"/>
</dbReference>
<dbReference type="PDB" id="7MSM">
    <property type="method" value="EM"/>
    <property type="resolution" value="2.79 A"/>
    <property type="chains" value="H=1-152"/>
</dbReference>
<dbReference type="PDB" id="7MSZ">
    <property type="method" value="EM"/>
    <property type="resolution" value="3.10 A"/>
    <property type="chains" value="H=1-152"/>
</dbReference>
<dbReference type="PDB" id="7MT2">
    <property type="method" value="EM"/>
    <property type="resolution" value="2.76 A"/>
    <property type="chains" value="H=1-152"/>
</dbReference>
<dbReference type="PDB" id="7MT3">
    <property type="method" value="EM"/>
    <property type="resolution" value="2.80 A"/>
    <property type="chains" value="H=1-152"/>
</dbReference>
<dbReference type="PDB" id="7MT7">
    <property type="method" value="EM"/>
    <property type="resolution" value="2.71 A"/>
    <property type="chains" value="H=1-152"/>
</dbReference>
<dbReference type="PDB" id="7SFR">
    <property type="method" value="EM"/>
    <property type="resolution" value="2.60 A"/>
    <property type="chains" value="H=1-152"/>
</dbReference>
<dbReference type="PDBsum" id="5V7Q"/>
<dbReference type="PDBsum" id="5V93"/>
<dbReference type="PDBsum" id="7KGB"/>
<dbReference type="PDBsum" id="7MSC"/>
<dbReference type="PDBsum" id="7MSH"/>
<dbReference type="PDBsum" id="7MSM"/>
<dbReference type="PDBsum" id="7MSZ"/>
<dbReference type="PDBsum" id="7MT2"/>
<dbReference type="PDBsum" id="7MT3"/>
<dbReference type="PDBsum" id="7MT7"/>
<dbReference type="PDBsum" id="7SFR"/>
<dbReference type="EMDB" id="EMD-22865"/>
<dbReference type="EMDB" id="EMD-23961"/>
<dbReference type="EMDB" id="EMD-23962"/>
<dbReference type="EMDB" id="EMD-23969"/>
<dbReference type="EMDB" id="EMD-23972"/>
<dbReference type="EMDB" id="EMD-23974"/>
<dbReference type="EMDB" id="EMD-23975"/>
<dbReference type="EMDB" id="EMD-23976"/>
<dbReference type="EMDB" id="EMD-8645"/>
<dbReference type="SMR" id="P9WH79"/>
<dbReference type="FunCoup" id="P9WH79">
    <property type="interactions" value="301"/>
</dbReference>
<dbReference type="STRING" id="83332.Rv0056"/>
<dbReference type="PaxDb" id="83332-Rv0056"/>
<dbReference type="GeneID" id="45424015"/>
<dbReference type="GeneID" id="887010"/>
<dbReference type="KEGG" id="mtu:Rv0056"/>
<dbReference type="KEGG" id="mtv:RVBD_0056"/>
<dbReference type="TubercuList" id="Rv0056"/>
<dbReference type="eggNOG" id="COG0359">
    <property type="taxonomic scope" value="Bacteria"/>
</dbReference>
<dbReference type="InParanoid" id="P9WH79"/>
<dbReference type="OrthoDB" id="9788336at2"/>
<dbReference type="PhylomeDB" id="P9WH79"/>
<dbReference type="PRO" id="PR:P9WH79"/>
<dbReference type="Proteomes" id="UP000001584">
    <property type="component" value="Chromosome"/>
</dbReference>
<dbReference type="GO" id="GO:0005829">
    <property type="term" value="C:cytosol"/>
    <property type="evidence" value="ECO:0007005"/>
    <property type="project" value="MTBBASE"/>
</dbReference>
<dbReference type="GO" id="GO:0022625">
    <property type="term" value="C:cytosolic large ribosomal subunit"/>
    <property type="evidence" value="ECO:0000318"/>
    <property type="project" value="GO_Central"/>
</dbReference>
<dbReference type="GO" id="GO:0009274">
    <property type="term" value="C:peptidoglycan-based cell wall"/>
    <property type="evidence" value="ECO:0007005"/>
    <property type="project" value="MTBBASE"/>
</dbReference>
<dbReference type="GO" id="GO:0005886">
    <property type="term" value="C:plasma membrane"/>
    <property type="evidence" value="ECO:0007005"/>
    <property type="project" value="MTBBASE"/>
</dbReference>
<dbReference type="GO" id="GO:0019843">
    <property type="term" value="F:rRNA binding"/>
    <property type="evidence" value="ECO:0007669"/>
    <property type="project" value="UniProtKB-UniRule"/>
</dbReference>
<dbReference type="GO" id="GO:0003735">
    <property type="term" value="F:structural constituent of ribosome"/>
    <property type="evidence" value="ECO:0007669"/>
    <property type="project" value="InterPro"/>
</dbReference>
<dbReference type="GO" id="GO:0006412">
    <property type="term" value="P:translation"/>
    <property type="evidence" value="ECO:0007669"/>
    <property type="project" value="UniProtKB-UniRule"/>
</dbReference>
<dbReference type="FunFam" id="3.10.430.100:FF:000006">
    <property type="entry name" value="50S ribosomal protein L9"/>
    <property type="match status" value="1"/>
</dbReference>
<dbReference type="FunFam" id="3.40.5.10:FF:000003">
    <property type="entry name" value="50S ribosomal protein L9"/>
    <property type="match status" value="1"/>
</dbReference>
<dbReference type="Gene3D" id="3.10.430.100">
    <property type="entry name" value="Ribosomal protein L9, C-terminal domain"/>
    <property type="match status" value="1"/>
</dbReference>
<dbReference type="Gene3D" id="3.40.5.10">
    <property type="entry name" value="Ribosomal protein L9, N-terminal domain"/>
    <property type="match status" value="1"/>
</dbReference>
<dbReference type="HAMAP" id="MF_00503">
    <property type="entry name" value="Ribosomal_bL9"/>
    <property type="match status" value="1"/>
</dbReference>
<dbReference type="InterPro" id="IPR000244">
    <property type="entry name" value="Ribosomal_bL9"/>
</dbReference>
<dbReference type="InterPro" id="IPR009027">
    <property type="entry name" value="Ribosomal_bL9/RNase_H1_N"/>
</dbReference>
<dbReference type="InterPro" id="IPR020594">
    <property type="entry name" value="Ribosomal_bL9_bac/chp"/>
</dbReference>
<dbReference type="InterPro" id="IPR020069">
    <property type="entry name" value="Ribosomal_bL9_C"/>
</dbReference>
<dbReference type="InterPro" id="IPR036791">
    <property type="entry name" value="Ribosomal_bL9_C_sf"/>
</dbReference>
<dbReference type="InterPro" id="IPR020070">
    <property type="entry name" value="Ribosomal_bL9_N"/>
</dbReference>
<dbReference type="InterPro" id="IPR036935">
    <property type="entry name" value="Ribosomal_bL9_N_sf"/>
</dbReference>
<dbReference type="NCBIfam" id="TIGR00158">
    <property type="entry name" value="L9"/>
    <property type="match status" value="1"/>
</dbReference>
<dbReference type="PANTHER" id="PTHR21368">
    <property type="entry name" value="50S RIBOSOMAL PROTEIN L9"/>
    <property type="match status" value="1"/>
</dbReference>
<dbReference type="Pfam" id="PF03948">
    <property type="entry name" value="Ribosomal_L9_C"/>
    <property type="match status" value="1"/>
</dbReference>
<dbReference type="Pfam" id="PF01281">
    <property type="entry name" value="Ribosomal_L9_N"/>
    <property type="match status" value="1"/>
</dbReference>
<dbReference type="SUPFAM" id="SSF55658">
    <property type="entry name" value="L9 N-domain-like"/>
    <property type="match status" value="1"/>
</dbReference>
<dbReference type="SUPFAM" id="SSF55653">
    <property type="entry name" value="Ribosomal protein L9 C-domain"/>
    <property type="match status" value="1"/>
</dbReference>
<dbReference type="PROSITE" id="PS00651">
    <property type="entry name" value="RIBOSOMAL_L9"/>
    <property type="match status" value="1"/>
</dbReference>
<protein>
    <recommendedName>
        <fullName evidence="1">Large ribosomal subunit protein bL9</fullName>
    </recommendedName>
    <alternativeName>
        <fullName evidence="2">50S ribosomal protein L9</fullName>
    </alternativeName>
</protein>
<sequence length="152" mass="16170">MKLILTADVDHLGSIGDTVEVKDGYGRNFLLPRGLAIVASRGAQKQADEIRRARETKSVRDLEHANEIKAAIEALGPIALPVKTSADSGKLFGSVTAADVVAAIKKAGGPNLDKRIVRLPKTHIKAVGTHFVSVHLHPEIDVEVSLDVVAQS</sequence>
<gene>
    <name evidence="1" type="primary">rplI</name>
    <name type="ordered locus">Rv0056</name>
    <name type="ORF">MTCY21D4.19</name>
</gene>
<reference key="1">
    <citation type="journal article" date="1998" name="Nature">
        <title>Deciphering the biology of Mycobacterium tuberculosis from the complete genome sequence.</title>
        <authorList>
            <person name="Cole S.T."/>
            <person name="Brosch R."/>
            <person name="Parkhill J."/>
            <person name="Garnier T."/>
            <person name="Churcher C.M."/>
            <person name="Harris D.E."/>
            <person name="Gordon S.V."/>
            <person name="Eiglmeier K."/>
            <person name="Gas S."/>
            <person name="Barry C.E. III"/>
            <person name="Tekaia F."/>
            <person name="Badcock K."/>
            <person name="Basham D."/>
            <person name="Brown D."/>
            <person name="Chillingworth T."/>
            <person name="Connor R."/>
            <person name="Davies R.M."/>
            <person name="Devlin K."/>
            <person name="Feltwell T."/>
            <person name="Gentles S."/>
            <person name="Hamlin N."/>
            <person name="Holroyd S."/>
            <person name="Hornsby T."/>
            <person name="Jagels K."/>
            <person name="Krogh A."/>
            <person name="McLean J."/>
            <person name="Moule S."/>
            <person name="Murphy L.D."/>
            <person name="Oliver S."/>
            <person name="Osborne J."/>
            <person name="Quail M.A."/>
            <person name="Rajandream M.A."/>
            <person name="Rogers J."/>
            <person name="Rutter S."/>
            <person name="Seeger K."/>
            <person name="Skelton S."/>
            <person name="Squares S."/>
            <person name="Squares R."/>
            <person name="Sulston J.E."/>
            <person name="Taylor K."/>
            <person name="Whitehead S."/>
            <person name="Barrell B.G."/>
        </authorList>
    </citation>
    <scope>NUCLEOTIDE SEQUENCE [LARGE SCALE GENOMIC DNA]</scope>
    <source>
        <strain>ATCC 25618 / H37Rv</strain>
    </source>
</reference>
<reference key="2">
    <citation type="journal article" date="2011" name="Mol. Cell. Proteomics">
        <title>Proteogenomic analysis of Mycobacterium tuberculosis by high resolution mass spectrometry.</title>
        <authorList>
            <person name="Kelkar D.S."/>
            <person name="Kumar D."/>
            <person name="Kumar P."/>
            <person name="Balakrishnan L."/>
            <person name="Muthusamy B."/>
            <person name="Yadav A.K."/>
            <person name="Shrivastava P."/>
            <person name="Marimuthu A."/>
            <person name="Anand S."/>
            <person name="Sundaram H."/>
            <person name="Kingsbury R."/>
            <person name="Harsha H.C."/>
            <person name="Nair B."/>
            <person name="Prasad T.S."/>
            <person name="Chauhan D.S."/>
            <person name="Katoch K."/>
            <person name="Katoch V.M."/>
            <person name="Kumar P."/>
            <person name="Chaerkady R."/>
            <person name="Ramachandran S."/>
            <person name="Dash D."/>
            <person name="Pandey A."/>
        </authorList>
    </citation>
    <scope>IDENTIFICATION BY MASS SPECTROMETRY [LARGE SCALE ANALYSIS]</scope>
    <source>
        <strain>ATCC 25618 / H37Rv</strain>
    </source>
</reference>